<name>METK1_DAUCA</name>
<accession>Q56TU4</accession>
<dbReference type="EC" id="2.5.1.6" evidence="5"/>
<dbReference type="EMBL" id="AY583461">
    <property type="protein sequence ID" value="AAT85665.1"/>
    <property type="molecule type" value="mRNA"/>
</dbReference>
<dbReference type="SMR" id="Q56TU4"/>
<dbReference type="UniPathway" id="UPA00315">
    <property type="reaction ID" value="UER00080"/>
</dbReference>
<dbReference type="GO" id="GO:0005737">
    <property type="term" value="C:cytoplasm"/>
    <property type="evidence" value="ECO:0007669"/>
    <property type="project" value="UniProtKB-SubCell"/>
</dbReference>
<dbReference type="GO" id="GO:0005524">
    <property type="term" value="F:ATP binding"/>
    <property type="evidence" value="ECO:0007669"/>
    <property type="project" value="UniProtKB-KW"/>
</dbReference>
<dbReference type="GO" id="GO:0046872">
    <property type="term" value="F:metal ion binding"/>
    <property type="evidence" value="ECO:0007669"/>
    <property type="project" value="UniProtKB-KW"/>
</dbReference>
<dbReference type="GO" id="GO:0004478">
    <property type="term" value="F:methionine adenosyltransferase activity"/>
    <property type="evidence" value="ECO:0007669"/>
    <property type="project" value="UniProtKB-EC"/>
</dbReference>
<dbReference type="GO" id="GO:0006730">
    <property type="term" value="P:one-carbon metabolic process"/>
    <property type="evidence" value="ECO:0007669"/>
    <property type="project" value="UniProtKB-KW"/>
</dbReference>
<dbReference type="GO" id="GO:0006556">
    <property type="term" value="P:S-adenosylmethionine biosynthetic process"/>
    <property type="evidence" value="ECO:0007669"/>
    <property type="project" value="UniProtKB-UniPathway"/>
</dbReference>
<dbReference type="CDD" id="cd18079">
    <property type="entry name" value="S-AdoMet_synt"/>
    <property type="match status" value="1"/>
</dbReference>
<dbReference type="FunFam" id="3.30.300.10:FF:000001">
    <property type="entry name" value="S-adenosylmethionine synthase"/>
    <property type="match status" value="1"/>
</dbReference>
<dbReference type="FunFam" id="3.30.300.10:FF:000003">
    <property type="entry name" value="S-adenosylmethionine synthase"/>
    <property type="match status" value="1"/>
</dbReference>
<dbReference type="FunFam" id="3.30.300.10:FF:000004">
    <property type="entry name" value="S-adenosylmethionine synthase"/>
    <property type="match status" value="1"/>
</dbReference>
<dbReference type="Gene3D" id="3.30.300.10">
    <property type="match status" value="4"/>
</dbReference>
<dbReference type="HAMAP" id="MF_00086">
    <property type="entry name" value="S_AdoMet_synth1"/>
    <property type="match status" value="1"/>
</dbReference>
<dbReference type="InterPro" id="IPR022631">
    <property type="entry name" value="ADOMET_SYNTHASE_CS"/>
</dbReference>
<dbReference type="InterPro" id="IPR022630">
    <property type="entry name" value="S-AdoMet_synt_C"/>
</dbReference>
<dbReference type="InterPro" id="IPR022629">
    <property type="entry name" value="S-AdoMet_synt_central"/>
</dbReference>
<dbReference type="InterPro" id="IPR022628">
    <property type="entry name" value="S-AdoMet_synt_N"/>
</dbReference>
<dbReference type="InterPro" id="IPR002133">
    <property type="entry name" value="S-AdoMet_synthetase"/>
</dbReference>
<dbReference type="InterPro" id="IPR022636">
    <property type="entry name" value="S-AdoMet_synthetase_sfam"/>
</dbReference>
<dbReference type="NCBIfam" id="TIGR01034">
    <property type="entry name" value="metK"/>
    <property type="match status" value="1"/>
</dbReference>
<dbReference type="PANTHER" id="PTHR11964">
    <property type="entry name" value="S-ADENOSYLMETHIONINE SYNTHETASE"/>
    <property type="match status" value="1"/>
</dbReference>
<dbReference type="Pfam" id="PF02773">
    <property type="entry name" value="S-AdoMet_synt_C"/>
    <property type="match status" value="2"/>
</dbReference>
<dbReference type="Pfam" id="PF02772">
    <property type="entry name" value="S-AdoMet_synt_M"/>
    <property type="match status" value="1"/>
</dbReference>
<dbReference type="Pfam" id="PF00438">
    <property type="entry name" value="S-AdoMet_synt_N"/>
    <property type="match status" value="1"/>
</dbReference>
<dbReference type="PIRSF" id="PIRSF000497">
    <property type="entry name" value="MAT"/>
    <property type="match status" value="1"/>
</dbReference>
<dbReference type="SUPFAM" id="SSF55973">
    <property type="entry name" value="S-adenosylmethionine synthetase"/>
    <property type="match status" value="4"/>
</dbReference>
<dbReference type="PROSITE" id="PS00376">
    <property type="entry name" value="ADOMET_SYNTHASE_1"/>
    <property type="match status" value="1"/>
</dbReference>
<dbReference type="PROSITE" id="PS00377">
    <property type="entry name" value="ADOMET_SYNTHASE_2"/>
    <property type="match status" value="1"/>
</dbReference>
<organism>
    <name type="scientific">Daucus carota</name>
    <name type="common">Wild carrot</name>
    <dbReference type="NCBI Taxonomy" id="4039"/>
    <lineage>
        <taxon>Eukaryota</taxon>
        <taxon>Viridiplantae</taxon>
        <taxon>Streptophyta</taxon>
        <taxon>Embryophyta</taxon>
        <taxon>Tracheophyta</taxon>
        <taxon>Spermatophyta</taxon>
        <taxon>Magnoliopsida</taxon>
        <taxon>eudicotyledons</taxon>
        <taxon>Gunneridae</taxon>
        <taxon>Pentapetalae</taxon>
        <taxon>asterids</taxon>
        <taxon>campanulids</taxon>
        <taxon>Apiales</taxon>
        <taxon>Apiaceae</taxon>
        <taxon>Apioideae</taxon>
        <taxon>Scandiceae</taxon>
        <taxon>Daucinae</taxon>
        <taxon>Daucus</taxon>
        <taxon>Daucus sect. Daucus</taxon>
    </lineage>
</organism>
<protein>
    <recommendedName>
        <fullName>S-adenosylmethionine synthase 1</fullName>
        <shortName>AdoMet synthase 1</shortName>
        <ecNumber evidence="5">2.5.1.6</ecNumber>
    </recommendedName>
    <alternativeName>
        <fullName>Methionine adenosyltransferase 1</fullName>
        <shortName>MAT 1</shortName>
    </alternativeName>
</protein>
<reference key="1">
    <citation type="submission" date="2004-03" db="EMBL/GenBank/DDBJ databases">
        <title>S-adenosyl-L-methionine synthetase 1 mRNA sequence of Daucus carota L.</title>
        <authorList>
            <person name="Park S."/>
            <person name="Park J.-S."/>
            <person name="Park Y."/>
        </authorList>
    </citation>
    <scope>NUCLEOTIDE SEQUENCE [MRNA]</scope>
</reference>
<proteinExistence type="evidence at transcript level"/>
<evidence type="ECO:0000250" key="1"/>
<evidence type="ECO:0000250" key="2">
    <source>
        <dbReference type="UniProtKB" id="P0A817"/>
    </source>
</evidence>
<evidence type="ECO:0000250" key="3">
    <source>
        <dbReference type="UniProtKB" id="P13444"/>
    </source>
</evidence>
<evidence type="ECO:0000250" key="4">
    <source>
        <dbReference type="UniProtKB" id="Q00266"/>
    </source>
</evidence>
<evidence type="ECO:0000250" key="5">
    <source>
        <dbReference type="UniProtKB" id="Q96551"/>
    </source>
</evidence>
<evidence type="ECO:0000305" key="6"/>
<sequence>MDTFLYTSESVNEGHPDKLCDQISDAVLDACLEQDPDSKVACETCSKTNMVMVFGEITTKANVDYEKIVHKTCRDIGFVSDDVGLDADNCKVLVQIEQQSPDIAQGVHGHLTKRPEDIGAGDQGHMFGYATDETPELMPLSHVLATKLGAKLTEVRKNGTCPWLRPDGKTQVTVEYYNDKGAMVPIRVHTVLISTQHDETVTNDEIAADLKEHVIKPIIPAKYLDEKTIFHLNPSGRFVIGGPHGDAGLTGRKIIIDTYGGWGAHGGGAFSGKDPTKVDRSGAYIVRQAAKSIVASGLARRCIVQVSYAIGVPEPLSVFVDSYGTGKIPDREILQIVKETFDFRPGMISINLDLKRGGNGRFLKTAAYGHFGTGKIPDREILKIVKETFDFRPGMISINLDLKRGGNGRFLKTAAYGHFGRDDPDFTWEVVKPLKWEKPQA</sequence>
<keyword id="KW-0067">ATP-binding</keyword>
<keyword id="KW-0170">Cobalt</keyword>
<keyword id="KW-0963">Cytoplasm</keyword>
<keyword id="KW-0460">Magnesium</keyword>
<keyword id="KW-0479">Metal-binding</keyword>
<keyword id="KW-0547">Nucleotide-binding</keyword>
<keyword id="KW-0554">One-carbon metabolism</keyword>
<keyword id="KW-0630">Potassium</keyword>
<keyword id="KW-0808">Transferase</keyword>
<comment type="function">
    <text evidence="5">Catalyzes the formation of S-adenosylmethionine from methionine and ATP. The reaction comprises two steps that are both catalyzed by the same enzyme: formation of S-adenosylmethionine (AdoMet) and triphosphate, and subsequent hydrolysis of the triphosphate.</text>
</comment>
<comment type="catalytic activity">
    <reaction evidence="5">
        <text>L-methionine + ATP + H2O = S-adenosyl-L-methionine + phosphate + diphosphate</text>
        <dbReference type="Rhea" id="RHEA:21080"/>
        <dbReference type="ChEBI" id="CHEBI:15377"/>
        <dbReference type="ChEBI" id="CHEBI:30616"/>
        <dbReference type="ChEBI" id="CHEBI:33019"/>
        <dbReference type="ChEBI" id="CHEBI:43474"/>
        <dbReference type="ChEBI" id="CHEBI:57844"/>
        <dbReference type="ChEBI" id="CHEBI:59789"/>
        <dbReference type="EC" id="2.5.1.6"/>
    </reaction>
</comment>
<comment type="cofactor">
    <cofactor evidence="5">
        <name>Mn(2+)</name>
        <dbReference type="ChEBI" id="CHEBI:29035"/>
    </cofactor>
    <cofactor evidence="5">
        <name>Mg(2+)</name>
        <dbReference type="ChEBI" id="CHEBI:18420"/>
    </cofactor>
    <cofactor evidence="5">
        <name>Co(2+)</name>
        <dbReference type="ChEBI" id="CHEBI:48828"/>
    </cofactor>
    <text evidence="3 5">Binds 2 divalent ions per subunit. The metal ions interact primarily with the substrate (By similarity). Can utilize magnesium, manganese or cobalt (in vitro) (By similarity).</text>
</comment>
<comment type="cofactor">
    <cofactor evidence="5">
        <name>K(+)</name>
        <dbReference type="ChEBI" id="CHEBI:29103"/>
    </cofactor>
    <text evidence="3">Binds 1 potassium ion per subunit. The potassium ion interacts primarily with the substrate (By similarity).</text>
</comment>
<comment type="pathway">
    <text evidence="5">Amino-acid biosynthesis; S-adenosyl-L-methionine biosynthesis; S-adenosyl-L-methionine from L-methionine: step 1/1.</text>
</comment>
<comment type="subunit">
    <text evidence="1">Homotetramer.</text>
</comment>
<comment type="subcellular location">
    <subcellularLocation>
        <location evidence="1">Cytoplasm</location>
    </subcellularLocation>
</comment>
<comment type="similarity">
    <text evidence="6">Belongs to the AdoMet synthase family.</text>
</comment>
<gene>
    <name type="primary">SAMS1</name>
</gene>
<feature type="chain" id="PRO_0000363019" description="S-adenosylmethionine synthase 1">
    <location>
        <begin position="1"/>
        <end position="441"/>
    </location>
</feature>
<feature type="binding site" evidence="3">
    <location>
        <position position="9"/>
    </location>
    <ligand>
        <name>Mg(2+)</name>
        <dbReference type="ChEBI" id="CHEBI:18420"/>
    </ligand>
</feature>
<feature type="binding site" description="in other chain" evidence="4">
    <location>
        <position position="15"/>
    </location>
    <ligand>
        <name>ATP</name>
        <dbReference type="ChEBI" id="CHEBI:30616"/>
        <note>ligand shared between two neighboring subunits</note>
    </ligand>
</feature>
<feature type="binding site" evidence="2">
    <location>
        <position position="43"/>
    </location>
    <ligand>
        <name>K(+)</name>
        <dbReference type="ChEBI" id="CHEBI:29103"/>
    </ligand>
</feature>
<feature type="binding site" description="in other chain" evidence="2">
    <location>
        <position position="56"/>
    </location>
    <ligand>
        <name>L-methionine</name>
        <dbReference type="ChEBI" id="CHEBI:57844"/>
        <note>ligand shared between two neighboring subunits</note>
    </ligand>
</feature>
<feature type="binding site" description="in other chain" evidence="2">
    <location>
        <position position="99"/>
    </location>
    <ligand>
        <name>L-methionine</name>
        <dbReference type="ChEBI" id="CHEBI:57844"/>
        <note>ligand shared between two neighboring subunits</note>
    </ligand>
</feature>
<feature type="binding site" description="in other chain" evidence="4">
    <location>
        <begin position="167"/>
        <end position="169"/>
    </location>
    <ligand>
        <name>ATP</name>
        <dbReference type="ChEBI" id="CHEBI:30616"/>
        <note>ligand shared between two neighboring subunits</note>
    </ligand>
</feature>
<feature type="binding site" description="in other chain" evidence="4">
    <location>
        <begin position="235"/>
        <end position="238"/>
    </location>
    <ligand>
        <name>ATP</name>
        <dbReference type="ChEBI" id="CHEBI:30616"/>
        <note>ligand shared between two neighboring subunits</note>
    </ligand>
</feature>
<feature type="binding site" description="in other chain" evidence="4">
    <location>
        <position position="246"/>
    </location>
    <ligand>
        <name>ATP</name>
        <dbReference type="ChEBI" id="CHEBI:30616"/>
        <note>ligand shared between two neighboring subunits</note>
    </ligand>
</feature>
<feature type="binding site" evidence="2">
    <location>
        <position position="246"/>
    </location>
    <ligand>
        <name>L-methionine</name>
        <dbReference type="ChEBI" id="CHEBI:57844"/>
        <note>ligand shared between two neighboring subunits</note>
    </ligand>
</feature>
<feature type="binding site" description="in other chain" evidence="2">
    <location>
        <begin position="252"/>
        <end position="253"/>
    </location>
    <ligand>
        <name>ATP</name>
        <dbReference type="ChEBI" id="CHEBI:30616"/>
        <note>ligand shared between two neighboring subunits</note>
    </ligand>
</feature>
<feature type="binding site" evidence="2">
    <location>
        <position position="269"/>
    </location>
    <ligand>
        <name>ATP</name>
        <dbReference type="ChEBI" id="CHEBI:30616"/>
        <note>ligand shared between two neighboring subunits</note>
    </ligand>
</feature>
<feature type="binding site" evidence="2">
    <location>
        <position position="273"/>
    </location>
    <ligand>
        <name>ATP</name>
        <dbReference type="ChEBI" id="CHEBI:30616"/>
        <note>ligand shared between two neighboring subunits</note>
    </ligand>
</feature>
<feature type="binding site" evidence="3">
    <location>
        <position position="277"/>
    </location>
    <ligand>
        <name>ATP</name>
        <dbReference type="ChEBI" id="CHEBI:30616"/>
        <note>ligand shared between two neighboring subunits</note>
    </ligand>
</feature>
<feature type="binding site" description="in other chain" evidence="2">
    <location>
        <position position="277"/>
    </location>
    <ligand>
        <name>L-methionine</name>
        <dbReference type="ChEBI" id="CHEBI:57844"/>
        <note>ligand shared between two neighboring subunits</note>
    </ligand>
</feature>